<keyword id="KW-0092">Biotin</keyword>
<keyword id="KW-1015">Disulfide bond</keyword>
<keyword id="KW-0325">Glycoprotein</keyword>
<keyword id="KW-1185">Reference proteome</keyword>
<keyword id="KW-0964">Secreted</keyword>
<keyword id="KW-0732">Signal</keyword>
<accession>P56736</accession>
<accession>Q9W6V4</accession>
<gene>
    <name type="primary">AVR7</name>
</gene>
<evidence type="ECO:0000250" key="1">
    <source>
        <dbReference type="UniProtKB" id="P56732"/>
    </source>
</evidence>
<evidence type="ECO:0000255" key="2"/>
<evidence type="ECO:0000255" key="3">
    <source>
        <dbReference type="PROSITE-ProRule" id="PRU00656"/>
    </source>
</evidence>
<evidence type="ECO:0000269" key="4">
    <source>
    </source>
</evidence>
<evidence type="ECO:0000305" key="5"/>
<reference key="1">
    <citation type="journal article" date="2000" name="Anim. Genet.">
        <title>Characterization and chromosomal localization of the chicken avidin gene family.</title>
        <authorList>
            <person name="Ahlroth M.K."/>
            <person name="Kola E.H."/>
            <person name="Ewald D."/>
            <person name="Masabanda J."/>
            <person name="Sazanov A."/>
            <person name="Fries R."/>
            <person name="Kulomaa M.S."/>
        </authorList>
    </citation>
    <scope>NUCLEOTIDE SEQUENCE [GENOMIC DNA]</scope>
    <source>
        <strain>Rhode Island</strain>
    </source>
</reference>
<reference key="2">
    <citation type="journal article" date="2002" name="Biochem. J.">
        <title>Chicken avidin-related proteins show altered biotin-binding and physico-chemical properties as compared with avidin.</title>
        <authorList>
            <person name="Laitinen O.H."/>
            <person name="Hytoenen V.P."/>
            <person name="Ahlroth M.K."/>
            <person name="Pentikaeinen O.T."/>
            <person name="Gallagher C."/>
            <person name="Nordlund H.R."/>
            <person name="Ovod V."/>
            <person name="Marttila A.T."/>
            <person name="Porkka E."/>
            <person name="Heino S."/>
            <person name="Johnson M.S."/>
            <person name="Airenne K.J."/>
            <person name="Kulomaa M.S."/>
        </authorList>
    </citation>
    <scope>FUNCTION</scope>
    <scope>SUBUNIT</scope>
    <scope>GLYCOSYLATION</scope>
</reference>
<dbReference type="EMBL" id="AJ237659">
    <property type="protein sequence ID" value="CAB39894.1"/>
    <property type="molecule type" value="Genomic_DNA"/>
</dbReference>
<dbReference type="SMR" id="P56736"/>
<dbReference type="FunCoup" id="P56736">
    <property type="interactions" value="7"/>
</dbReference>
<dbReference type="GlyCosmos" id="P56736">
    <property type="glycosylation" value="4 sites, No reported glycans"/>
</dbReference>
<dbReference type="GlyGen" id="P56736">
    <property type="glycosylation" value="4 sites"/>
</dbReference>
<dbReference type="Ensembl" id="ENSGALT00010028103.1">
    <property type="protein sequence ID" value="ENSGALP00010016120.1"/>
    <property type="gene ID" value="ENSGALG00010011749.1"/>
</dbReference>
<dbReference type="VEuPathDB" id="HostDB:LOC427416"/>
<dbReference type="GeneTree" id="ENSGT00390000001847"/>
<dbReference type="InParanoid" id="P56736"/>
<dbReference type="OMA" id="DFTRMHT"/>
<dbReference type="OrthoDB" id="2821340at2759"/>
<dbReference type="PRO" id="PR:P56736"/>
<dbReference type="Proteomes" id="UP000000539">
    <property type="component" value="Chromosome Z"/>
</dbReference>
<dbReference type="GO" id="GO:0005576">
    <property type="term" value="C:extracellular region"/>
    <property type="evidence" value="ECO:0007669"/>
    <property type="project" value="UniProtKB-SubCell"/>
</dbReference>
<dbReference type="GO" id="GO:0009374">
    <property type="term" value="F:biotin binding"/>
    <property type="evidence" value="ECO:0000318"/>
    <property type="project" value="GO_Central"/>
</dbReference>
<dbReference type="FunFam" id="2.40.128.30:FF:000001">
    <property type="entry name" value="Avidin-related protein 2"/>
    <property type="match status" value="1"/>
</dbReference>
<dbReference type="Gene3D" id="2.40.128.30">
    <property type="entry name" value="Avidin-like"/>
    <property type="match status" value="1"/>
</dbReference>
<dbReference type="InterPro" id="IPR005469">
    <property type="entry name" value="Avidin"/>
</dbReference>
<dbReference type="InterPro" id="IPR017889">
    <property type="entry name" value="Avidin-like_CS"/>
</dbReference>
<dbReference type="InterPro" id="IPR036896">
    <property type="entry name" value="Avidin-like_sf"/>
</dbReference>
<dbReference type="InterPro" id="IPR005468">
    <property type="entry name" value="Avidin/str"/>
</dbReference>
<dbReference type="InterPro" id="IPR051764">
    <property type="entry name" value="Avidin/Streptavidin-rel"/>
</dbReference>
<dbReference type="PANTHER" id="PTHR34399:SF3">
    <property type="entry name" value="AVID PROTEIN-RELATED"/>
    <property type="match status" value="1"/>
</dbReference>
<dbReference type="PANTHER" id="PTHR34399">
    <property type="entry name" value="AVIDIN-RELATED"/>
    <property type="match status" value="1"/>
</dbReference>
<dbReference type="Pfam" id="PF01382">
    <property type="entry name" value="Avidin"/>
    <property type="match status" value="1"/>
</dbReference>
<dbReference type="PRINTS" id="PR00709">
    <property type="entry name" value="AVIDIN"/>
</dbReference>
<dbReference type="SUPFAM" id="SSF50876">
    <property type="entry name" value="Avidin/streptavidin"/>
    <property type="match status" value="1"/>
</dbReference>
<dbReference type="PROSITE" id="PS00577">
    <property type="entry name" value="AVIDIN_1"/>
    <property type="match status" value="1"/>
</dbReference>
<dbReference type="PROSITE" id="PS51326">
    <property type="entry name" value="AVIDIN_2"/>
    <property type="match status" value="1"/>
</dbReference>
<feature type="signal peptide" evidence="2">
    <location>
        <begin position="1"/>
        <end position="24"/>
    </location>
</feature>
<feature type="chain" id="PRO_0000002728" description="Avidin-related protein 7">
    <location>
        <begin position="25"/>
        <end position="150"/>
    </location>
</feature>
<feature type="domain" description="Avidin-like" evidence="3">
    <location>
        <begin position="26"/>
        <end position="147"/>
    </location>
</feature>
<feature type="binding site" evidence="1">
    <location>
        <position position="36"/>
    </location>
    <ligand>
        <name>biotin</name>
        <dbReference type="ChEBI" id="CHEBI:57586"/>
    </ligand>
</feature>
<feature type="binding site" evidence="1">
    <location>
        <position position="40"/>
    </location>
    <ligand>
        <name>biotin</name>
        <dbReference type="ChEBI" id="CHEBI:57586"/>
    </ligand>
</feature>
<feature type="binding site" evidence="1">
    <location>
        <position position="57"/>
    </location>
    <ligand>
        <name>biotin</name>
        <dbReference type="ChEBI" id="CHEBI:57586"/>
    </ligand>
</feature>
<feature type="binding site" evidence="1">
    <location>
        <position position="59"/>
    </location>
    <ligand>
        <name>biotin</name>
        <dbReference type="ChEBI" id="CHEBI:57586"/>
    </ligand>
</feature>
<feature type="binding site" evidence="1">
    <location>
        <position position="63"/>
    </location>
    <ligand>
        <name>biotin</name>
        <dbReference type="ChEBI" id="CHEBI:57586"/>
    </ligand>
</feature>
<feature type="binding site" evidence="1">
    <location>
        <position position="95"/>
    </location>
    <ligand>
        <name>biotin</name>
        <dbReference type="ChEBI" id="CHEBI:57586"/>
    </ligand>
</feature>
<feature type="binding site" evidence="1">
    <location>
        <position position="99"/>
    </location>
    <ligand>
        <name>biotin</name>
        <dbReference type="ChEBI" id="CHEBI:57586"/>
    </ligand>
</feature>
<feature type="binding site" evidence="1">
    <location>
        <position position="140"/>
    </location>
    <ligand>
        <name>biotin</name>
        <dbReference type="ChEBI" id="CHEBI:57586"/>
    </ligand>
</feature>
<feature type="glycosylation site" description="N-linked (GlcNAc...) asparagine" evidence="2">
    <location>
        <position position="41"/>
    </location>
</feature>
<feature type="glycosylation site" description="N-linked (GlcNAc...) asparagine" evidence="2">
    <location>
        <position position="54"/>
    </location>
</feature>
<feature type="glycosylation site" description="N-linked (GlcNAc...) asparagine" evidence="2">
    <location>
        <position position="93"/>
    </location>
</feature>
<feature type="glycosylation site" description="N-linked (GlcNAc...) asparagine" evidence="2">
    <location>
        <position position="141"/>
    </location>
</feature>
<feature type="disulfide bond" evidence="1">
    <location>
        <begin position="28"/>
        <end position="105"/>
    </location>
</feature>
<name>AVR7_CHICK</name>
<protein>
    <recommendedName>
        <fullName>Avidin-related protein 7</fullName>
    </recommendedName>
</protein>
<sequence length="150" mass="16543">MVHATSPLLLLLLLSLALVAPGLSARKCSLTGEWDNNLGSNMTIGAVNDNGEFNGTYITAVADNPGNIKLSPLLGIQHKRACQPTFGFTVHWNFSESTSVFVGQCFIDRSGKEVLKTKWLQRLAVDDISDDWKATRVGYNNFTRQRTVEE</sequence>
<comment type="function">
    <text evidence="4">Forms a strong non-covalent specific complex with biotin.</text>
</comment>
<comment type="subunit">
    <text evidence="3 4">Homotetramer.</text>
</comment>
<comment type="subcellular location">
    <subcellularLocation>
        <location evidence="3">Secreted</location>
    </subcellularLocation>
</comment>
<comment type="PTM">
    <text evidence="4">Glycosylated.</text>
</comment>
<comment type="similarity">
    <text evidence="5">Belongs to the avidin/streptavidin family.</text>
</comment>
<proteinExistence type="evidence at protein level"/>
<organism>
    <name type="scientific">Gallus gallus</name>
    <name type="common">Chicken</name>
    <dbReference type="NCBI Taxonomy" id="9031"/>
    <lineage>
        <taxon>Eukaryota</taxon>
        <taxon>Metazoa</taxon>
        <taxon>Chordata</taxon>
        <taxon>Craniata</taxon>
        <taxon>Vertebrata</taxon>
        <taxon>Euteleostomi</taxon>
        <taxon>Archelosauria</taxon>
        <taxon>Archosauria</taxon>
        <taxon>Dinosauria</taxon>
        <taxon>Saurischia</taxon>
        <taxon>Theropoda</taxon>
        <taxon>Coelurosauria</taxon>
        <taxon>Aves</taxon>
        <taxon>Neognathae</taxon>
        <taxon>Galloanserae</taxon>
        <taxon>Galliformes</taxon>
        <taxon>Phasianidae</taxon>
        <taxon>Phasianinae</taxon>
        <taxon>Gallus</taxon>
    </lineage>
</organism>